<comment type="function">
    <text evidence="8">Acts as a guanine nucleotide exchange factor (GEF) for RhoA GTPase. May be involved in activation of the SAPK/JNK pathway Stimulates genotoxic stress-induced RHOB activity in breast cancer cells leading to their cell death.</text>
</comment>
<comment type="subunit">
    <text evidence="1">Interacts with RHOA in its GTP- and GDP-bound states, and with CDC42 in its GTP-bound state. Interacts with the PDZ 1 domain of BAIAP1 (By similarity).</text>
</comment>
<comment type="interaction">
    <interactant intactId="EBI-2511306">
        <id>Q7Z628</id>
    </interactant>
    <interactant intactId="EBI-357481">
        <id>Q12959</id>
        <label>DLG1</label>
    </interactant>
    <organismsDiffer>false</organismsDiffer>
    <experiments>5</experiments>
</comment>
<comment type="interaction">
    <interactant intactId="EBI-2511306">
        <id>Q7Z628</id>
    </interactant>
    <interactant intactId="EBI-713635">
        <id>O43639</id>
        <label>NCK2</label>
    </interactant>
    <organismsDiffer>false</organismsDiffer>
    <experiments>3</experiments>
</comment>
<comment type="interaction">
    <interactant intactId="EBI-2511306">
        <id>Q7Z628</id>
    </interactant>
    <interactant intactId="EBI-357345">
        <id>Q14160</id>
        <label>SCRIB</label>
    </interactant>
    <organismsDiffer>false</organismsDiffer>
    <experiments>2</experiments>
</comment>
<comment type="subcellular location">
    <subcellularLocation>
        <location evidence="1">Cytoplasm</location>
    </subcellularLocation>
    <subcellularLocation>
        <location evidence="1">Nucleus</location>
    </subcellularLocation>
</comment>
<comment type="alternative products">
    <event type="alternative splicing"/>
    <isoform>
        <id>Q7Z628-1</id>
        <name>1</name>
        <sequence type="displayed"/>
    </isoform>
    <isoform>
        <id>Q7Z628-2</id>
        <name>2</name>
        <sequence type="described" ref="VSP_011619 VSP_011620"/>
    </isoform>
</comment>
<comment type="tissue specificity">
    <text evidence="9">Widely expressed.</text>
</comment>
<comment type="induction">
    <text evidence="6 8">By TGFB1. Up-regulated by DNA damaging agents like H(2)O(2) or ionizing radiation (IR).</text>
</comment>
<comment type="sequence caution" evidence="12">
    <conflict type="frameshift">
        <sequence resource="EMBL-CDS" id="AAB08847"/>
    </conflict>
</comment>
<comment type="sequence caution" evidence="12">
    <conflict type="frameshift">
        <sequence resource="EMBL-CDS" id="AAB37683"/>
    </conflict>
</comment>
<comment type="sequence caution" evidence="12">
    <conflict type="frameshift">
        <sequence resource="EMBL-CDS" id="CAA08974"/>
    </conflict>
</comment>
<comment type="online information" name="Atlas of Genetics and Cytogenetics in Oncology and Haematology">
    <link uri="https://atlasgeneticsoncology.org/gene/41526/NET1"/>
</comment>
<keyword id="KW-0002">3D-structure</keyword>
<keyword id="KW-0007">Acetylation</keyword>
<keyword id="KW-0025">Alternative splicing</keyword>
<keyword id="KW-0963">Cytoplasm</keyword>
<keyword id="KW-0344">Guanine-nucleotide releasing factor</keyword>
<keyword id="KW-0539">Nucleus</keyword>
<keyword id="KW-0597">Phosphoprotein</keyword>
<keyword id="KW-1267">Proteomics identification</keyword>
<keyword id="KW-0656">Proto-oncogene</keyword>
<keyword id="KW-1185">Reference proteome</keyword>
<protein>
    <recommendedName>
        <fullName>Neuroepithelial cell-transforming gene 1 protein</fullName>
    </recommendedName>
    <alternativeName>
        <fullName>Proto-oncogene p65 Net1</fullName>
    </alternativeName>
    <alternativeName>
        <fullName>Rho guanine nucleotide exchange factor 8</fullName>
    </alternativeName>
</protein>
<name>ARHG8_HUMAN</name>
<gene>
    <name type="primary">NET1</name>
    <name type="synonym">ARHGEF8</name>
</gene>
<feature type="chain" id="PRO_0000080924" description="Neuroepithelial cell-transforming gene 1 protein">
    <location>
        <begin position="1"/>
        <end position="596"/>
    </location>
</feature>
<feature type="domain" description="DH" evidence="3">
    <location>
        <begin position="174"/>
        <end position="356"/>
    </location>
</feature>
<feature type="domain" description="PH" evidence="4">
    <location>
        <begin position="386"/>
        <end position="501"/>
    </location>
</feature>
<feature type="region of interest" description="Necessary for nuclear localization" evidence="1">
    <location>
        <begin position="1"/>
        <end position="74"/>
    </location>
</feature>
<feature type="region of interest" description="Disordered" evidence="5">
    <location>
        <begin position="1"/>
        <end position="44"/>
    </location>
</feature>
<feature type="region of interest" description="Disordered" evidence="5">
    <location>
        <begin position="127"/>
        <end position="146"/>
    </location>
</feature>
<feature type="region of interest" description="Disordered" evidence="5">
    <location>
        <begin position="562"/>
        <end position="596"/>
    </location>
</feature>
<feature type="short sequence motif" description="Nuclear localization signal" evidence="1">
    <location>
        <begin position="12"/>
        <end position="19"/>
    </location>
</feature>
<feature type="short sequence motif" description="Nuclear localization signal" evidence="1">
    <location>
        <begin position="66"/>
        <end position="72"/>
    </location>
</feature>
<feature type="compositionally biased region" description="Polar residues" evidence="5">
    <location>
        <begin position="22"/>
        <end position="38"/>
    </location>
</feature>
<feature type="compositionally biased region" description="Polar residues" evidence="5">
    <location>
        <begin position="133"/>
        <end position="145"/>
    </location>
</feature>
<feature type="modified residue" description="N-acetylmethionine" evidence="15">
    <location>
        <position position="1"/>
    </location>
</feature>
<feature type="modified residue" description="Phosphoserine" evidence="14 16">
    <location>
        <position position="21"/>
    </location>
</feature>
<feature type="modified residue" description="Phosphoserine" evidence="14">
    <location>
        <position position="32"/>
    </location>
</feature>
<feature type="modified residue" description="Phosphoserine" evidence="16">
    <location>
        <position position="100"/>
    </location>
</feature>
<feature type="modified residue" description="Phosphoserine" evidence="13 14 16">
    <location>
        <position position="106"/>
    </location>
</feature>
<feature type="modified residue" description="Phosphoserine" evidence="16">
    <location>
        <position position="122"/>
    </location>
</feature>
<feature type="modified residue" description="Phosphoserine" evidence="2">
    <location>
        <position position="508"/>
    </location>
</feature>
<feature type="splice variant" id="VSP_011619" description="In isoform 2." evidence="10 11">
    <location>
        <begin position="1"/>
        <end position="54"/>
    </location>
</feature>
<feature type="splice variant" id="VSP_011620" description="In isoform 2." evidence="10 11">
    <original>LTPGPNWDFTLKRKRREKDDDVVSLSSLDLK</original>
    <variation>MVAHDETGGLLPIKRTIRVLDVNNQSFREQE</variation>
    <location>
        <begin position="55"/>
        <end position="85"/>
    </location>
</feature>
<feature type="sequence variant" id="VAR_035972" description="In a breast cancer sample; somatic mutation." evidence="7">
    <original>D</original>
    <variation>N</variation>
    <location>
        <position position="202"/>
    </location>
</feature>
<feature type="sequence variant" id="VAR_051982" description="In dbSNP:rs34658946.">
    <original>T</original>
    <variation>I</variation>
    <location>
        <position position="417"/>
    </location>
</feature>
<feature type="sequence conflict" description="In Ref. 1; AAB37683." evidence="12" ref="1">
    <original>E</original>
    <variation>R</variation>
    <location>
        <position position="39"/>
    </location>
</feature>
<feature type="sequence conflict" description="In Ref. 1; AAB37683." evidence="12" ref="1">
    <original>W</original>
    <variation>C</variation>
    <location>
        <position position="61"/>
    </location>
</feature>
<feature type="sequence conflict" description="In Ref. 1; AAB08847." evidence="12" ref="1">
    <original>TVPT</original>
    <variation>MDGW</variation>
    <location>
        <begin position="143"/>
        <end position="146"/>
    </location>
</feature>
<feature type="helix" evidence="17">
    <location>
        <begin position="170"/>
        <end position="199"/>
    </location>
</feature>
<feature type="helix" evidence="17">
    <location>
        <begin position="201"/>
        <end position="206"/>
    </location>
</feature>
<feature type="helix" evidence="17">
    <location>
        <begin position="212"/>
        <end position="219"/>
    </location>
</feature>
<feature type="turn" evidence="17">
    <location>
        <begin position="220"/>
        <end position="225"/>
    </location>
</feature>
<feature type="helix" evidence="17">
    <location>
        <begin position="226"/>
        <end position="238"/>
    </location>
</feature>
<feature type="helix" evidence="17">
    <location>
        <begin position="250"/>
        <end position="256"/>
    </location>
</feature>
<feature type="helix" evidence="17">
    <location>
        <begin position="257"/>
        <end position="263"/>
    </location>
</feature>
<feature type="helix" evidence="17">
    <location>
        <begin position="264"/>
        <end position="279"/>
    </location>
</feature>
<feature type="helix" evidence="17">
    <location>
        <begin position="280"/>
        <end position="282"/>
    </location>
</feature>
<feature type="helix" evidence="17">
    <location>
        <begin position="284"/>
        <end position="295"/>
    </location>
</feature>
<feature type="helix" evidence="17">
    <location>
        <begin position="297"/>
        <end position="299"/>
    </location>
</feature>
<feature type="helix" evidence="17">
    <location>
        <begin position="304"/>
        <end position="308"/>
    </location>
</feature>
<feature type="helix" evidence="17">
    <location>
        <begin position="310"/>
        <end position="315"/>
    </location>
</feature>
<feature type="helix" evidence="17">
    <location>
        <begin position="318"/>
        <end position="327"/>
    </location>
</feature>
<feature type="helix" evidence="17">
    <location>
        <begin position="335"/>
        <end position="366"/>
    </location>
</feature>
<feature type="helix" evidence="17">
    <location>
        <begin position="374"/>
        <end position="376"/>
    </location>
</feature>
<feature type="helix" evidence="17">
    <location>
        <begin position="379"/>
        <end position="382"/>
    </location>
</feature>
<feature type="strand" evidence="17">
    <location>
        <begin position="387"/>
        <end position="395"/>
    </location>
</feature>
<feature type="strand" evidence="17">
    <location>
        <begin position="400"/>
        <end position="416"/>
    </location>
</feature>
<feature type="strand" evidence="17">
    <location>
        <begin position="418"/>
        <end position="420"/>
    </location>
</feature>
<feature type="strand" evidence="17">
    <location>
        <begin position="423"/>
        <end position="426"/>
    </location>
</feature>
<feature type="helix" evidence="17">
    <location>
        <begin position="433"/>
        <end position="435"/>
    </location>
</feature>
<feature type="strand" evidence="17">
    <location>
        <begin position="436"/>
        <end position="440"/>
    </location>
</feature>
<feature type="strand" evidence="17">
    <location>
        <begin position="464"/>
        <end position="470"/>
    </location>
</feature>
<feature type="strand" evidence="17">
    <location>
        <begin position="478"/>
        <end position="482"/>
    </location>
</feature>
<feature type="helix" evidence="17">
    <location>
        <begin position="486"/>
        <end position="501"/>
    </location>
</feature>
<proteinExistence type="evidence at protein level"/>
<organism>
    <name type="scientific">Homo sapiens</name>
    <name type="common">Human</name>
    <dbReference type="NCBI Taxonomy" id="9606"/>
    <lineage>
        <taxon>Eukaryota</taxon>
        <taxon>Metazoa</taxon>
        <taxon>Chordata</taxon>
        <taxon>Craniata</taxon>
        <taxon>Vertebrata</taxon>
        <taxon>Euteleostomi</taxon>
        <taxon>Mammalia</taxon>
        <taxon>Eutheria</taxon>
        <taxon>Euarchontoglires</taxon>
        <taxon>Primates</taxon>
        <taxon>Haplorrhini</taxon>
        <taxon>Catarrhini</taxon>
        <taxon>Hominidae</taxon>
        <taxon>Homo</taxon>
    </lineage>
</organism>
<dbReference type="EMBL" id="S82401">
    <property type="protein sequence ID" value="AAB37683.1"/>
    <property type="status" value="ALT_FRAME"/>
    <property type="molecule type" value="mRNA"/>
</dbReference>
<dbReference type="EMBL" id="U02081">
    <property type="protein sequence ID" value="AAB08847.1"/>
    <property type="status" value="ALT_FRAME"/>
    <property type="molecule type" value="mRNA"/>
</dbReference>
<dbReference type="EMBL" id="AJ010046">
    <property type="protein sequence ID" value="CAA08974.1"/>
    <property type="status" value="ALT_FRAME"/>
    <property type="molecule type" value="mRNA"/>
</dbReference>
<dbReference type="EMBL" id="BC010285">
    <property type="protein sequence ID" value="AAH10285.1"/>
    <property type="molecule type" value="mRNA"/>
</dbReference>
<dbReference type="EMBL" id="BC053553">
    <property type="protein sequence ID" value="AAH53553.1"/>
    <property type="molecule type" value="mRNA"/>
</dbReference>
<dbReference type="CCDS" id="CCDS41483.1">
    <molecule id="Q7Z628-1"/>
</dbReference>
<dbReference type="CCDS" id="CCDS7067.1">
    <molecule id="Q7Z628-2"/>
</dbReference>
<dbReference type="PIR" id="G01210">
    <property type="entry name" value="G01210"/>
</dbReference>
<dbReference type="RefSeq" id="NP_001040625.1">
    <molecule id="Q7Z628-1"/>
    <property type="nucleotide sequence ID" value="NM_001047160.3"/>
</dbReference>
<dbReference type="RefSeq" id="NP_005854.2">
    <molecule id="Q7Z628-2"/>
    <property type="nucleotide sequence ID" value="NM_005863.4"/>
</dbReference>
<dbReference type="PDB" id="3EO2">
    <property type="method" value="X-ray"/>
    <property type="resolution" value="2.60 A"/>
    <property type="chains" value="A=161-373"/>
</dbReference>
<dbReference type="PDB" id="4XH9">
    <property type="method" value="X-ray"/>
    <property type="resolution" value="2.00 A"/>
    <property type="chains" value="A/D=149-501"/>
</dbReference>
<dbReference type="PDBsum" id="3EO2"/>
<dbReference type="PDBsum" id="4XH9"/>
<dbReference type="SMR" id="Q7Z628"/>
<dbReference type="BioGRID" id="115565">
    <property type="interactions" value="42"/>
</dbReference>
<dbReference type="FunCoup" id="Q7Z628">
    <property type="interactions" value="910"/>
</dbReference>
<dbReference type="IntAct" id="Q7Z628">
    <property type="interactions" value="25"/>
</dbReference>
<dbReference type="MINT" id="Q7Z628"/>
<dbReference type="STRING" id="9606.ENSP00000347134"/>
<dbReference type="BindingDB" id="Q7Z628"/>
<dbReference type="ChEMBL" id="CHEMBL4295880"/>
<dbReference type="GlyGen" id="Q7Z628">
    <property type="glycosylation" value="1 site"/>
</dbReference>
<dbReference type="iPTMnet" id="Q7Z628"/>
<dbReference type="PhosphoSitePlus" id="Q7Z628"/>
<dbReference type="BioMuta" id="NET1"/>
<dbReference type="DMDM" id="52782735"/>
<dbReference type="jPOST" id="Q7Z628"/>
<dbReference type="MassIVE" id="Q7Z628"/>
<dbReference type="PaxDb" id="9606-ENSP00000347134"/>
<dbReference type="PeptideAtlas" id="Q7Z628"/>
<dbReference type="ProteomicsDB" id="69371">
    <molecule id="Q7Z628-1"/>
</dbReference>
<dbReference type="ProteomicsDB" id="69372">
    <molecule id="Q7Z628-2"/>
</dbReference>
<dbReference type="Pumba" id="Q7Z628"/>
<dbReference type="Antibodypedia" id="10610">
    <property type="antibodies" value="403 antibodies from 35 providers"/>
</dbReference>
<dbReference type="DNASU" id="10276"/>
<dbReference type="Ensembl" id="ENST00000355029.9">
    <molecule id="Q7Z628-1"/>
    <property type="protein sequence ID" value="ENSP00000347134.4"/>
    <property type="gene ID" value="ENSG00000173848.19"/>
</dbReference>
<dbReference type="Ensembl" id="ENST00000380359.3">
    <molecule id="Q7Z628-2"/>
    <property type="protein sequence ID" value="ENSP00000369717.3"/>
    <property type="gene ID" value="ENSG00000173848.19"/>
</dbReference>
<dbReference type="GeneID" id="10276"/>
<dbReference type="KEGG" id="hsa:10276"/>
<dbReference type="MANE-Select" id="ENST00000355029.9">
    <property type="protein sequence ID" value="ENSP00000347134.4"/>
    <property type="RefSeq nucleotide sequence ID" value="NM_001047160.3"/>
    <property type="RefSeq protein sequence ID" value="NP_001040625.1"/>
</dbReference>
<dbReference type="UCSC" id="uc001iia.5">
    <molecule id="Q7Z628-1"/>
    <property type="organism name" value="human"/>
</dbReference>
<dbReference type="AGR" id="HGNC:14592"/>
<dbReference type="CTD" id="10276"/>
<dbReference type="DisGeNET" id="10276"/>
<dbReference type="GeneCards" id="NET1"/>
<dbReference type="HGNC" id="HGNC:14592">
    <property type="gene designation" value="NET1"/>
</dbReference>
<dbReference type="HPA" id="ENSG00000173848">
    <property type="expression patterns" value="Low tissue specificity"/>
</dbReference>
<dbReference type="MIM" id="606450">
    <property type="type" value="gene"/>
</dbReference>
<dbReference type="neXtProt" id="NX_Q7Z628"/>
<dbReference type="OpenTargets" id="ENSG00000173848"/>
<dbReference type="PharmGKB" id="PA164742175"/>
<dbReference type="VEuPathDB" id="HostDB:ENSG00000173848"/>
<dbReference type="eggNOG" id="KOG4305">
    <property type="taxonomic scope" value="Eukaryota"/>
</dbReference>
<dbReference type="GeneTree" id="ENSGT00940000155849"/>
<dbReference type="HOGENOM" id="CLU_027428_2_0_1"/>
<dbReference type="InParanoid" id="Q7Z628"/>
<dbReference type="OMA" id="ECGENDP"/>
<dbReference type="OrthoDB" id="1716625at2759"/>
<dbReference type="PAN-GO" id="Q7Z628">
    <property type="GO annotations" value="1 GO annotation based on evolutionary models"/>
</dbReference>
<dbReference type="PhylomeDB" id="Q7Z628"/>
<dbReference type="TreeFam" id="TF328974"/>
<dbReference type="PathwayCommons" id="Q7Z628"/>
<dbReference type="Reactome" id="R-HSA-193648">
    <property type="pathway name" value="NRAGE signals death through JNK"/>
</dbReference>
<dbReference type="Reactome" id="R-HSA-416482">
    <property type="pathway name" value="G alpha (12/13) signalling events"/>
</dbReference>
<dbReference type="Reactome" id="R-HSA-8980692">
    <property type="pathway name" value="RHOA GTPase cycle"/>
</dbReference>
<dbReference type="Reactome" id="R-HSA-9013026">
    <property type="pathway name" value="RHOB GTPase cycle"/>
</dbReference>
<dbReference type="SignaLink" id="Q7Z628"/>
<dbReference type="SIGNOR" id="Q7Z628"/>
<dbReference type="BioGRID-ORCS" id="10276">
    <property type="hits" value="9 hits in 1161 CRISPR screens"/>
</dbReference>
<dbReference type="ChiTaRS" id="NET1">
    <property type="organism name" value="human"/>
</dbReference>
<dbReference type="EvolutionaryTrace" id="Q7Z628"/>
<dbReference type="GeneWiki" id="NET1"/>
<dbReference type="GenomeRNAi" id="10276"/>
<dbReference type="Pharos" id="Q7Z628">
    <property type="development level" value="Tbio"/>
</dbReference>
<dbReference type="PRO" id="PR:Q7Z628"/>
<dbReference type="Proteomes" id="UP000005640">
    <property type="component" value="Chromosome 10"/>
</dbReference>
<dbReference type="RNAct" id="Q7Z628">
    <property type="molecule type" value="protein"/>
</dbReference>
<dbReference type="Bgee" id="ENSG00000173848">
    <property type="expression patterns" value="Expressed in tendon of biceps brachii and 212 other cell types or tissues"/>
</dbReference>
<dbReference type="ExpressionAtlas" id="Q7Z628">
    <property type="expression patterns" value="baseline and differential"/>
</dbReference>
<dbReference type="GO" id="GO:0005829">
    <property type="term" value="C:cytosol"/>
    <property type="evidence" value="ECO:0000304"/>
    <property type="project" value="Reactome"/>
</dbReference>
<dbReference type="GO" id="GO:0005634">
    <property type="term" value="C:nucleus"/>
    <property type="evidence" value="ECO:0007669"/>
    <property type="project" value="UniProtKB-SubCell"/>
</dbReference>
<dbReference type="GO" id="GO:0005085">
    <property type="term" value="F:guanyl-nucleotide exchange factor activity"/>
    <property type="evidence" value="ECO:0000304"/>
    <property type="project" value="Reactome"/>
</dbReference>
<dbReference type="GO" id="GO:0070301">
    <property type="term" value="P:cellular response to hydrogen peroxide"/>
    <property type="evidence" value="ECO:0000314"/>
    <property type="project" value="UniProtKB"/>
</dbReference>
<dbReference type="GO" id="GO:0071479">
    <property type="term" value="P:cellular response to ionizing radiation"/>
    <property type="evidence" value="ECO:0000314"/>
    <property type="project" value="UniProtKB"/>
</dbReference>
<dbReference type="GO" id="GO:0035556">
    <property type="term" value="P:intracellular signal transduction"/>
    <property type="evidence" value="ECO:0007669"/>
    <property type="project" value="InterPro"/>
</dbReference>
<dbReference type="GO" id="GO:0051451">
    <property type="term" value="P:myoblast migration"/>
    <property type="evidence" value="ECO:0007669"/>
    <property type="project" value="Ensembl"/>
</dbReference>
<dbReference type="GO" id="GO:0043065">
    <property type="term" value="P:positive regulation of apoptotic process"/>
    <property type="evidence" value="ECO:0000314"/>
    <property type="project" value="UniProtKB"/>
</dbReference>
<dbReference type="GO" id="GO:0043547">
    <property type="term" value="P:positive regulation of GTPase activity"/>
    <property type="evidence" value="ECO:0000315"/>
    <property type="project" value="UniProtKB"/>
</dbReference>
<dbReference type="GO" id="GO:0035025">
    <property type="term" value="P:positive regulation of Rho protein signal transduction"/>
    <property type="evidence" value="ECO:0000318"/>
    <property type="project" value="GO_Central"/>
</dbReference>
<dbReference type="GO" id="GO:0001558">
    <property type="term" value="P:regulation of cell growth"/>
    <property type="evidence" value="ECO:0000303"/>
    <property type="project" value="UniProtKB"/>
</dbReference>
<dbReference type="GO" id="GO:0051056">
    <property type="term" value="P:regulation of small GTPase mediated signal transduction"/>
    <property type="evidence" value="ECO:0000304"/>
    <property type="project" value="Reactome"/>
</dbReference>
<dbReference type="GO" id="GO:0007165">
    <property type="term" value="P:signal transduction"/>
    <property type="evidence" value="ECO:0000304"/>
    <property type="project" value="ProtInc"/>
</dbReference>
<dbReference type="CDD" id="cd13224">
    <property type="entry name" value="PH_Net1"/>
    <property type="match status" value="1"/>
</dbReference>
<dbReference type="CDD" id="cd00160">
    <property type="entry name" value="RhoGEF"/>
    <property type="match status" value="1"/>
</dbReference>
<dbReference type="FunFam" id="2.30.29.30:FF:000151">
    <property type="entry name" value="Rho guanine nucleotide exchange factor 3"/>
    <property type="match status" value="1"/>
</dbReference>
<dbReference type="FunFam" id="1.20.900.10:FF:000010">
    <property type="entry name" value="Rho guanine nucleotide exchange factor 3 isoform 1"/>
    <property type="match status" value="1"/>
</dbReference>
<dbReference type="Gene3D" id="1.20.900.10">
    <property type="entry name" value="Dbl homology (DH) domain"/>
    <property type="match status" value="1"/>
</dbReference>
<dbReference type="Gene3D" id="2.30.29.30">
    <property type="entry name" value="Pleckstrin-homology domain (PH domain)/Phosphotyrosine-binding domain (PTB)"/>
    <property type="match status" value="1"/>
</dbReference>
<dbReference type="InterPro" id="IPR035899">
    <property type="entry name" value="DBL_dom_sf"/>
</dbReference>
<dbReference type="InterPro" id="IPR000219">
    <property type="entry name" value="DH_dom"/>
</dbReference>
<dbReference type="InterPro" id="IPR051480">
    <property type="entry name" value="Endocytic_GEF_Adapter"/>
</dbReference>
<dbReference type="InterPro" id="IPR001331">
    <property type="entry name" value="GDS_CDC24_CS"/>
</dbReference>
<dbReference type="InterPro" id="IPR037853">
    <property type="entry name" value="Net1_PH"/>
</dbReference>
<dbReference type="InterPro" id="IPR011993">
    <property type="entry name" value="PH-like_dom_sf"/>
</dbReference>
<dbReference type="InterPro" id="IPR001849">
    <property type="entry name" value="PH_domain"/>
</dbReference>
<dbReference type="InterPro" id="IPR055251">
    <property type="entry name" value="SOS1_NGEF_PH"/>
</dbReference>
<dbReference type="PANTHER" id="PTHR46006:SF4">
    <property type="entry name" value="NEUROEPITHELIAL CELL-TRANSFORMING GENE 1 PROTEIN"/>
    <property type="match status" value="1"/>
</dbReference>
<dbReference type="PANTHER" id="PTHR46006">
    <property type="entry name" value="RHO GUANINE NUCLEOTIDE EXCHANGE FACTOR AT 64C, ISOFORM A"/>
    <property type="match status" value="1"/>
</dbReference>
<dbReference type="Pfam" id="PF00621">
    <property type="entry name" value="RhoGEF"/>
    <property type="match status" value="1"/>
</dbReference>
<dbReference type="Pfam" id="PF22697">
    <property type="entry name" value="SOS1_NGEF_PH"/>
    <property type="match status" value="1"/>
</dbReference>
<dbReference type="SMART" id="SM00233">
    <property type="entry name" value="PH"/>
    <property type="match status" value="1"/>
</dbReference>
<dbReference type="SMART" id="SM00325">
    <property type="entry name" value="RhoGEF"/>
    <property type="match status" value="1"/>
</dbReference>
<dbReference type="SUPFAM" id="SSF48065">
    <property type="entry name" value="DBL homology domain (DH-domain)"/>
    <property type="match status" value="1"/>
</dbReference>
<dbReference type="SUPFAM" id="SSF50729">
    <property type="entry name" value="PH domain-like"/>
    <property type="match status" value="1"/>
</dbReference>
<dbReference type="PROSITE" id="PS00741">
    <property type="entry name" value="DH_1"/>
    <property type="match status" value="1"/>
</dbReference>
<dbReference type="PROSITE" id="PS50010">
    <property type="entry name" value="DH_2"/>
    <property type="match status" value="1"/>
</dbReference>
<dbReference type="PROSITE" id="PS50003">
    <property type="entry name" value="PH_DOMAIN"/>
    <property type="match status" value="1"/>
</dbReference>
<reference key="1">
    <citation type="journal article" date="1996" name="Oncogene">
        <title>Isolation of a novel oncogene, NET1, from neuroepithelioma cells by expression cDNA cloning.</title>
        <authorList>
            <person name="Chan A.M.-L."/>
            <person name="Takai S."/>
            <person name="Yamada K."/>
            <person name="Miki T."/>
        </authorList>
    </citation>
    <scope>NUCLEOTIDE SEQUENCE [MRNA] (ISOFORM 2)</scope>
    <scope>TISSUE SPECIFICITY</scope>
    <source>
        <tissue>Neuroepithelium</tissue>
    </source>
</reference>
<reference key="2">
    <citation type="journal article" date="2004" name="Genome Res.">
        <title>The status, quality, and expansion of the NIH full-length cDNA project: the Mammalian Gene Collection (MGC).</title>
        <authorList>
            <consortium name="The MGC Project Team"/>
        </authorList>
    </citation>
    <scope>NUCLEOTIDE SEQUENCE [LARGE SCALE MRNA] (ISOFORMS 1 AND 2)</scope>
    <source>
        <tissue>Eye</tissue>
        <tissue>Placenta</tissue>
    </source>
</reference>
<reference key="3">
    <citation type="journal article" date="2001" name="J. Biol. Chem.">
        <title>The activity of guanine exchange factor NET1 is essential for transforming growth factor-beta-mediated stress fiber formation.</title>
        <authorList>
            <person name="Shen X."/>
            <person name="Li J."/>
            <person name="Hu P.P.-C."/>
            <person name="Waddell D."/>
            <person name="Zhang J."/>
            <person name="Wang X.-F."/>
        </authorList>
    </citation>
    <scope>INDUCTION BY TGFB1</scope>
</reference>
<reference key="4">
    <citation type="journal article" date="2008" name="Proc. Natl. Acad. Sci. U.S.A.">
        <title>A quantitative atlas of mitotic phosphorylation.</title>
        <authorList>
            <person name="Dephoure N."/>
            <person name="Zhou C."/>
            <person name="Villen J."/>
            <person name="Beausoleil S.A."/>
            <person name="Bakalarski C.E."/>
            <person name="Elledge S.J."/>
            <person name="Gygi S.P."/>
        </authorList>
    </citation>
    <scope>PHOSPHORYLATION [LARGE SCALE ANALYSIS] AT SER-106</scope>
    <scope>IDENTIFICATION BY MASS SPECTROMETRY [LARGE SCALE ANALYSIS]</scope>
    <source>
        <tissue>Cervix carcinoma</tissue>
    </source>
</reference>
<reference key="5">
    <citation type="journal article" date="2009" name="Sci. Signal.">
        <title>Quantitative phosphoproteomic analysis of T cell receptor signaling reveals system-wide modulation of protein-protein interactions.</title>
        <authorList>
            <person name="Mayya V."/>
            <person name="Lundgren D.H."/>
            <person name="Hwang S.-I."/>
            <person name="Rezaul K."/>
            <person name="Wu L."/>
            <person name="Eng J.K."/>
            <person name="Rodionov V."/>
            <person name="Han D.K."/>
        </authorList>
    </citation>
    <scope>PHOSPHORYLATION [LARGE SCALE ANALYSIS] AT SER-21; SER-32 AND SER-106</scope>
    <scope>IDENTIFICATION BY MASS SPECTROMETRY [LARGE SCALE ANALYSIS]</scope>
    <source>
        <tissue>Leukemic T-cell</tissue>
    </source>
</reference>
<reference key="6">
    <citation type="journal article" date="2011" name="PLoS ONE">
        <title>The nuclear guanine nucleotide exchange factors Ect2 and Net1 regulate RhoB-mediated cell death after DNA damage.</title>
        <authorList>
            <person name="Srougi M.C."/>
            <person name="Burridge K."/>
        </authorList>
    </citation>
    <scope>FUNCTION</scope>
    <scope>INDUCTION</scope>
</reference>
<reference key="7">
    <citation type="journal article" date="2012" name="Proc. Natl. Acad. Sci. U.S.A.">
        <title>N-terminal acetylome analyses and functional insights of the N-terminal acetyltransferase NatB.</title>
        <authorList>
            <person name="Van Damme P."/>
            <person name="Lasa M."/>
            <person name="Polevoda B."/>
            <person name="Gazquez C."/>
            <person name="Elosegui-Artola A."/>
            <person name="Kim D.S."/>
            <person name="De Juan-Pardo E."/>
            <person name="Demeyer K."/>
            <person name="Hole K."/>
            <person name="Larrea E."/>
            <person name="Timmerman E."/>
            <person name="Prieto J."/>
            <person name="Arnesen T."/>
            <person name="Sherman F."/>
            <person name="Gevaert K."/>
            <person name="Aldabe R."/>
        </authorList>
    </citation>
    <scope>ACETYLATION [LARGE SCALE ANALYSIS] AT MET-1</scope>
    <scope>IDENTIFICATION BY MASS SPECTROMETRY [LARGE SCALE ANALYSIS]</scope>
</reference>
<reference key="8">
    <citation type="journal article" date="2013" name="J. Proteome Res.">
        <title>Toward a comprehensive characterization of a human cancer cell phosphoproteome.</title>
        <authorList>
            <person name="Zhou H."/>
            <person name="Di Palma S."/>
            <person name="Preisinger C."/>
            <person name="Peng M."/>
            <person name="Polat A.N."/>
            <person name="Heck A.J."/>
            <person name="Mohammed S."/>
        </authorList>
    </citation>
    <scope>PHOSPHORYLATION [LARGE SCALE ANALYSIS] AT SER-21; SER-100; SER-106 AND SER-122</scope>
    <scope>IDENTIFICATION BY MASS SPECTROMETRY [LARGE SCALE ANALYSIS]</scope>
    <source>
        <tissue>Cervix carcinoma</tissue>
        <tissue>Erythroleukemia</tissue>
    </source>
</reference>
<reference key="9">
    <citation type="submission" date="2009-02" db="PDB data bank">
        <title>Crystal structure of the RhoGEF domain of human neuroepithelial cell-transforming gene 1 protein.</title>
        <authorList>
            <consortium name="Structural genomics consortium (SGC)"/>
        </authorList>
    </citation>
    <scope>X-RAY CRYSTALLOGRAPHY (2.6 ANGSTROMS) OF 161-373</scope>
</reference>
<reference key="10">
    <citation type="journal article" date="2006" name="Science">
        <title>The consensus coding sequences of human breast and colorectal cancers.</title>
        <authorList>
            <person name="Sjoeblom T."/>
            <person name="Jones S."/>
            <person name="Wood L.D."/>
            <person name="Parsons D.W."/>
            <person name="Lin J."/>
            <person name="Barber T.D."/>
            <person name="Mandelker D."/>
            <person name="Leary R.J."/>
            <person name="Ptak J."/>
            <person name="Silliman N."/>
            <person name="Szabo S."/>
            <person name="Buckhaults P."/>
            <person name="Farrell C."/>
            <person name="Meeh P."/>
            <person name="Markowitz S.D."/>
            <person name="Willis J."/>
            <person name="Dawson D."/>
            <person name="Willson J.K.V."/>
            <person name="Gazdar A.F."/>
            <person name="Hartigan J."/>
            <person name="Wu L."/>
            <person name="Liu C."/>
            <person name="Parmigiani G."/>
            <person name="Park B.H."/>
            <person name="Bachman K.E."/>
            <person name="Papadopoulos N."/>
            <person name="Vogelstein B."/>
            <person name="Kinzler K.W."/>
            <person name="Velculescu V.E."/>
        </authorList>
    </citation>
    <scope>VARIANT [LARGE SCALE ANALYSIS] ASN-202</scope>
</reference>
<sequence length="596" mass="67740">MEPELAAQKQPRPRRRSRRASGLSTEGATGPSADTSGSELDGRCSLRRGSSFTFLTPGPNWDFTLKRKRREKDDDVVSLSSLDLKEPSNKRVRPLARVTSLANLISPVRNGAVRRFGQTIQSFTLRGDHRSPASAQKFSSRSTVPTPAKRRSSALWSEMLDITMKESLTTREIRRQEAIYEMSRGEQDLIEDLKLARKAYHDPMLKLSIMSEEELTHIFGDLDSYIPLHEDLLTRIGEATKPDGTVEQIGHILVSWLPRLNAYRGYCSNQLAAKALLDQKKQDPRVQDFLQRCLESPFSRKLDLWSFLDIPRSRLVKYPLLLKEILKHTPKEHPDVQLLEDAILIIQGVLSDINLKKGESECQYYIDKLEYLDEKQRDPRIEASKVLLCHGELRSKSGHKLYIFLFQDILVLTRPVTRNERHSYQVYRQPIPVQELVLEDLQDGDVRMGGSFRGAFSNSEKAKNIFRIRFHDPSPAQSHTLQANDVFHKQQWFNCIRAAIAPFQSAGSPPELQGLPELHEECEGNHPSARKLTAQRRASTVSSVTQVEVDENAYRCGSGMQMAEDSKSLKTHQTQPGIRRARDKALSGGKRKETLV</sequence>
<evidence type="ECO:0000250" key="1"/>
<evidence type="ECO:0000250" key="2">
    <source>
        <dbReference type="UniProtKB" id="Q9Z206"/>
    </source>
</evidence>
<evidence type="ECO:0000255" key="3">
    <source>
        <dbReference type="PROSITE-ProRule" id="PRU00062"/>
    </source>
</evidence>
<evidence type="ECO:0000255" key="4">
    <source>
        <dbReference type="PROSITE-ProRule" id="PRU00145"/>
    </source>
</evidence>
<evidence type="ECO:0000256" key="5">
    <source>
        <dbReference type="SAM" id="MobiDB-lite"/>
    </source>
</evidence>
<evidence type="ECO:0000269" key="6">
    <source>
    </source>
</evidence>
<evidence type="ECO:0000269" key="7">
    <source>
    </source>
</evidence>
<evidence type="ECO:0000269" key="8">
    <source>
    </source>
</evidence>
<evidence type="ECO:0000269" key="9">
    <source>
    </source>
</evidence>
<evidence type="ECO:0000303" key="10">
    <source>
    </source>
</evidence>
<evidence type="ECO:0000303" key="11">
    <source>
    </source>
</evidence>
<evidence type="ECO:0000305" key="12"/>
<evidence type="ECO:0007744" key="13">
    <source>
    </source>
</evidence>
<evidence type="ECO:0007744" key="14">
    <source>
    </source>
</evidence>
<evidence type="ECO:0007744" key="15">
    <source>
    </source>
</evidence>
<evidence type="ECO:0007744" key="16">
    <source>
    </source>
</evidence>
<evidence type="ECO:0007829" key="17">
    <source>
        <dbReference type="PDB" id="4XH9"/>
    </source>
</evidence>
<accession>Q7Z628</accession>
<accession>Q12773</accession>
<accession>Q96D82</accession>
<accession>Q99903</accession>
<accession>Q9UEN6</accession>